<reference key="1">
    <citation type="journal article" date="2005" name="Proc. Natl. Acad. Sci. U.S.A.">
        <title>The complete genomes and proteomes of 27 Staphylococcus aureus bacteriophages.</title>
        <authorList>
            <person name="Kwan T."/>
            <person name="Liu J."/>
            <person name="DuBow M."/>
            <person name="Gros P."/>
            <person name="Pelletier J."/>
        </authorList>
    </citation>
    <scope>NUCLEOTIDE SEQUENCE [GENOMIC DNA]</scope>
</reference>
<organismHost>
    <name type="scientific">Twortvirus twort</name>
    <dbReference type="NCBI Taxonomy" id="55510"/>
</organismHost>
<feature type="chain" id="PRO_0000432538" description="Probable portal protein">
    <location>
        <begin position="1"/>
        <end position="576"/>
    </location>
</feature>
<feature type="region of interest" description="Disordered" evidence="2">
    <location>
        <begin position="374"/>
        <end position="399"/>
    </location>
</feature>
<feature type="region of interest" description="Disordered" evidence="2">
    <location>
        <begin position="506"/>
        <end position="576"/>
    </location>
</feature>
<feature type="compositionally biased region" description="Basic and acidic residues" evidence="2">
    <location>
        <begin position="519"/>
        <end position="533"/>
    </location>
</feature>
<feature type="compositionally biased region" description="Basic and acidic residues" evidence="2">
    <location>
        <begin position="565"/>
        <end position="576"/>
    </location>
</feature>
<comment type="function">
    <text evidence="1">Forms the portal vertex of the capsid. This portal plays critical roles in head assembly, genome packaging, neck/tail attachment, and genome ejection. The portal protein multimerizes as a single ring-shaped homododecamer arranged around a central channel. Binds to the terminase subunits to form the packaging machine.</text>
</comment>
<comment type="subunit">
    <text evidence="1">Homododecamer.</text>
</comment>
<comment type="subcellular location">
    <subcellularLocation>
        <location evidence="1">Virion</location>
    </subcellularLocation>
</comment>
<comment type="similarity">
    <text evidence="3">Belongs to the phage portal family.</text>
</comment>
<dbReference type="EMBL" id="AY954970">
    <property type="protein sequence ID" value="AAX92308.1"/>
    <property type="molecule type" value="Genomic_DNA"/>
</dbReference>
<dbReference type="RefSeq" id="YP_238542.1">
    <property type="nucleotide sequence ID" value="NC_007021.1"/>
</dbReference>
<dbReference type="SMR" id="Q4Z9G3"/>
<dbReference type="GeneID" id="5130361"/>
<dbReference type="KEGG" id="vg:5130361"/>
<dbReference type="Proteomes" id="UP000001466">
    <property type="component" value="Segment"/>
</dbReference>
<dbReference type="GO" id="GO:0019028">
    <property type="term" value="C:viral capsid"/>
    <property type="evidence" value="ECO:0007669"/>
    <property type="project" value="UniProtKB-KW"/>
</dbReference>
<dbReference type="GO" id="GO:0003677">
    <property type="term" value="F:DNA binding"/>
    <property type="evidence" value="ECO:0007669"/>
    <property type="project" value="UniProtKB-KW"/>
</dbReference>
<dbReference type="GO" id="GO:0099000">
    <property type="term" value="P:symbiont genome ejection through host cell envelope, contractile tail mechanism"/>
    <property type="evidence" value="ECO:0007669"/>
    <property type="project" value="UniProtKB-KW"/>
</dbReference>
<dbReference type="InterPro" id="IPR006944">
    <property type="entry name" value="Phage/GTA_portal"/>
</dbReference>
<dbReference type="Pfam" id="PF04860">
    <property type="entry name" value="Phage_portal"/>
    <property type="match status" value="1"/>
</dbReference>
<accession>Q4Z9G3</accession>
<proteinExistence type="inferred from homology"/>
<evidence type="ECO:0000250" key="1">
    <source>
        <dbReference type="UniProtKB" id="P25480"/>
    </source>
</evidence>
<evidence type="ECO:0000256" key="2">
    <source>
        <dbReference type="SAM" id="MobiDB-lite"/>
    </source>
</evidence>
<evidence type="ECO:0000305" key="3"/>
<keyword id="KW-0167">Capsid protein</keyword>
<keyword id="KW-0238">DNA-binding</keyword>
<keyword id="KW-1185">Reference proteome</keyword>
<keyword id="KW-0118">Viral capsid assembly</keyword>
<keyword id="KW-1242">Viral contractile tail ejection system</keyword>
<keyword id="KW-1171">Viral genome ejection through host cell envelope</keyword>
<keyword id="KW-0231">Viral genome packaging</keyword>
<keyword id="KW-1162">Viral penetration into host cytoplasm</keyword>
<keyword id="KW-1188">Viral release from host cell</keyword>
<keyword id="KW-0946">Virion</keyword>
<keyword id="KW-1160">Virus entry into host cell</keyword>
<name>PORTL_BPTWO</name>
<sequence length="576" mass="65673">MVTRLADIFKRLRLGRDYEDIIDTVPIDDGLQANIRNIEEKSKELNKSLYGKQQAYAEPFLEVMDTNPEFRTKRSYMKNSDNLHDVLKQFGNNPILNAIILTRSNQVAMYCQPSRYNERGLGFEVRMRDLDAEPGKKEKEEIKRIENFILNTGRDKDIDRDSFQSFCRKIVRDTYTYDQVNFEKVFNKKNATTMDKFIAVDPSTIFYATDKNGKIIKGGKRFVQVINKKVVASFTSREMAMGIRNPRTELSSSGYGLSEVEIAMKQFIAYNNTETFNDRFFSHGGTTRGILQIKSEQQQSQRALENFKREWKSSFSGINGSWQVPVVMADDIKFVNMTPTANDMQFEKWLTYLINIISALYGIDPAEIGFPNRGGATGGKGGNTLNEADPGKKQQQSQNKGLQPLLRFIEDLINTHIISEYSDKYVFQFVGGDTKSELDKIKILQEEVKTYKTVNEARKEKGLKPIEGGDVLLDGSFIQSMSLNTQKEQYEDTKQKERFDMIQQFLNSPDDEEPQQESTEDKVDGRESNDPTKIDSPVGTDGQLKDQDNVKSQEGSNKGQGTKGKGNEKPSDFKNN</sequence>
<protein>
    <recommendedName>
        <fullName>Probable portal protein</fullName>
    </recommendedName>
</protein>
<organism>
    <name type="scientific">Staphylococcus phage Twort (strain DSM 17442 / HER 48)</name>
    <name type="common">Bacteriophage Twort</name>
    <dbReference type="NCBI Taxonomy" id="2908167"/>
    <lineage>
        <taxon>Viruses</taxon>
        <taxon>Duplodnaviria</taxon>
        <taxon>Heunggongvirae</taxon>
        <taxon>Uroviricota</taxon>
        <taxon>Caudoviricetes</taxon>
        <taxon>Herelleviridae</taxon>
        <taxon>Twortvirinae</taxon>
        <taxon>Twortvirus</taxon>
        <taxon>Twortvirus twort</taxon>
    </lineage>
</organism>